<reference key="1">
    <citation type="submission" date="2004-11" db="EMBL/GenBank/DDBJ databases">
        <authorList>
            <consortium name="The German cDNA consortium"/>
        </authorList>
    </citation>
    <scope>NUCLEOTIDE SEQUENCE [LARGE SCALE MRNA]</scope>
    <source>
        <tissue>Kidney</tissue>
    </source>
</reference>
<organism>
    <name type="scientific">Pongo abelii</name>
    <name type="common">Sumatran orangutan</name>
    <name type="synonym">Pongo pygmaeus abelii</name>
    <dbReference type="NCBI Taxonomy" id="9601"/>
    <lineage>
        <taxon>Eukaryota</taxon>
        <taxon>Metazoa</taxon>
        <taxon>Chordata</taxon>
        <taxon>Craniata</taxon>
        <taxon>Vertebrata</taxon>
        <taxon>Euteleostomi</taxon>
        <taxon>Mammalia</taxon>
        <taxon>Eutheria</taxon>
        <taxon>Euarchontoglires</taxon>
        <taxon>Primates</taxon>
        <taxon>Haplorrhini</taxon>
        <taxon>Catarrhini</taxon>
        <taxon>Hominidae</taxon>
        <taxon>Pongo</taxon>
    </lineage>
</organism>
<feature type="chain" id="PRO_0000342363" description="Rho guanine nucleotide exchange factor 10-like protein">
    <location>
        <begin position="1"/>
        <end position="1233"/>
    </location>
</feature>
<feature type="domain" description="DH" evidence="4">
    <location>
        <begin position="275"/>
        <end position="462"/>
    </location>
</feature>
<feature type="region of interest" description="Disordered" evidence="5">
    <location>
        <begin position="1"/>
        <end position="93"/>
    </location>
</feature>
<feature type="region of interest" description="Disordered" evidence="5">
    <location>
        <begin position="159"/>
        <end position="193"/>
    </location>
</feature>
<feature type="region of interest" description="Disordered" evidence="5">
    <location>
        <begin position="1089"/>
        <end position="1117"/>
    </location>
</feature>
<feature type="region of interest" description="Disordered" evidence="5">
    <location>
        <begin position="1140"/>
        <end position="1161"/>
    </location>
</feature>
<feature type="compositionally biased region" description="Pro residues" evidence="5">
    <location>
        <begin position="1"/>
        <end position="10"/>
    </location>
</feature>
<feature type="compositionally biased region" description="Acidic residues" evidence="5">
    <location>
        <begin position="26"/>
        <end position="46"/>
    </location>
</feature>
<feature type="compositionally biased region" description="Low complexity" evidence="5">
    <location>
        <begin position="72"/>
        <end position="89"/>
    </location>
</feature>
<feature type="compositionally biased region" description="Basic and acidic residues" evidence="5">
    <location>
        <begin position="183"/>
        <end position="193"/>
    </location>
</feature>
<feature type="compositionally biased region" description="Basic and acidic residues" evidence="5">
    <location>
        <begin position="1089"/>
        <end position="1104"/>
    </location>
</feature>
<feature type="modified residue" description="Phosphoserine" evidence="3">
    <location>
        <position position="40"/>
    </location>
</feature>
<feature type="modified residue" description="Phosphotyrosine" evidence="2">
    <location>
        <position position="131"/>
    </location>
</feature>
<feature type="modified residue" description="Phosphotyrosine" evidence="2">
    <location>
        <position position="152"/>
    </location>
</feature>
<feature type="modified residue" description="Phosphoserine" evidence="3">
    <location>
        <position position="240"/>
    </location>
</feature>
<proteinExistence type="evidence at transcript level"/>
<name>ARGAL_PONAB</name>
<dbReference type="EMBL" id="CR860834">
    <property type="protein sequence ID" value="CAH92943.1"/>
    <property type="molecule type" value="mRNA"/>
</dbReference>
<dbReference type="RefSeq" id="NP_001127607.1">
    <property type="nucleotide sequence ID" value="NM_001134135.1"/>
</dbReference>
<dbReference type="SMR" id="Q5R5M3"/>
<dbReference type="FunCoup" id="Q5R5M3">
    <property type="interactions" value="696"/>
</dbReference>
<dbReference type="STRING" id="9601.ENSPPYP00000002097"/>
<dbReference type="GeneID" id="100174686"/>
<dbReference type="KEGG" id="pon:100174686"/>
<dbReference type="CTD" id="55160"/>
<dbReference type="eggNOG" id="KOG3522">
    <property type="taxonomic scope" value="Eukaryota"/>
</dbReference>
<dbReference type="InParanoid" id="Q5R5M3"/>
<dbReference type="OrthoDB" id="28697at2759"/>
<dbReference type="Proteomes" id="UP000001595">
    <property type="component" value="Unplaced"/>
</dbReference>
<dbReference type="GO" id="GO:0005829">
    <property type="term" value="C:cytosol"/>
    <property type="evidence" value="ECO:0007669"/>
    <property type="project" value="TreeGrafter"/>
</dbReference>
<dbReference type="GO" id="GO:0005085">
    <property type="term" value="F:guanyl-nucleotide exchange factor activity"/>
    <property type="evidence" value="ECO:0007669"/>
    <property type="project" value="UniProtKB-KW"/>
</dbReference>
<dbReference type="GO" id="GO:0030036">
    <property type="term" value="P:actin cytoskeleton organization"/>
    <property type="evidence" value="ECO:0007669"/>
    <property type="project" value="TreeGrafter"/>
</dbReference>
<dbReference type="GO" id="GO:0051496">
    <property type="term" value="P:positive regulation of stress fiber assembly"/>
    <property type="evidence" value="ECO:0007669"/>
    <property type="project" value="TreeGrafter"/>
</dbReference>
<dbReference type="GO" id="GO:0032933">
    <property type="term" value="P:SREBP signaling pathway"/>
    <property type="evidence" value="ECO:0007669"/>
    <property type="project" value="TreeGrafter"/>
</dbReference>
<dbReference type="CDD" id="cd00160">
    <property type="entry name" value="RhoGEF"/>
    <property type="match status" value="1"/>
</dbReference>
<dbReference type="FunFam" id="2.30.29.30:FF:000200">
    <property type="entry name" value="Rho guanine nucleotide exchange factor (GEF) 10-like a"/>
    <property type="match status" value="1"/>
</dbReference>
<dbReference type="FunFam" id="1.20.900.10:FF:000003">
    <property type="entry name" value="Rho guanine nucleotide exchange factor 10 like"/>
    <property type="match status" value="1"/>
</dbReference>
<dbReference type="FunFam" id="2.130.10.10:FF:000405">
    <property type="entry name" value="rho guanine nucleotide exchange factor 10-like protein isoform X1"/>
    <property type="match status" value="1"/>
</dbReference>
<dbReference type="Gene3D" id="1.20.900.10">
    <property type="entry name" value="Dbl homology (DH) domain"/>
    <property type="match status" value="1"/>
</dbReference>
<dbReference type="Gene3D" id="2.30.29.30">
    <property type="entry name" value="Pleckstrin-homology domain (PH domain)/Phosphotyrosine-binding domain (PTB)"/>
    <property type="match status" value="1"/>
</dbReference>
<dbReference type="Gene3D" id="2.130.10.10">
    <property type="entry name" value="YVTN repeat-like/Quinoprotein amine dehydrogenase"/>
    <property type="match status" value="1"/>
</dbReference>
<dbReference type="InterPro" id="IPR039919">
    <property type="entry name" value="ARHGEF10/ARHGEF17"/>
</dbReference>
<dbReference type="InterPro" id="IPR035899">
    <property type="entry name" value="DBL_dom_sf"/>
</dbReference>
<dbReference type="InterPro" id="IPR000219">
    <property type="entry name" value="DH_dom"/>
</dbReference>
<dbReference type="InterPro" id="IPR011993">
    <property type="entry name" value="PH-like_dom_sf"/>
</dbReference>
<dbReference type="InterPro" id="IPR015943">
    <property type="entry name" value="WD40/YVTN_repeat-like_dom_sf"/>
</dbReference>
<dbReference type="InterPro" id="IPR036322">
    <property type="entry name" value="WD40_repeat_dom_sf"/>
</dbReference>
<dbReference type="PANTHER" id="PTHR12877">
    <property type="entry name" value="RHO GUANINE NUCLEOTIDE EXCHANGE FACTOR"/>
    <property type="match status" value="1"/>
</dbReference>
<dbReference type="PANTHER" id="PTHR12877:SF16">
    <property type="entry name" value="RHO GUANINE NUCLEOTIDE EXCHANGE FACTOR 10-LIKE PROTEIN"/>
    <property type="match status" value="1"/>
</dbReference>
<dbReference type="Pfam" id="PF19057">
    <property type="entry name" value="PH_19"/>
    <property type="match status" value="1"/>
</dbReference>
<dbReference type="Pfam" id="PF00621">
    <property type="entry name" value="RhoGEF"/>
    <property type="match status" value="1"/>
</dbReference>
<dbReference type="Pfam" id="PF19056">
    <property type="entry name" value="WD40_2"/>
    <property type="match status" value="1"/>
</dbReference>
<dbReference type="SMART" id="SM00325">
    <property type="entry name" value="RhoGEF"/>
    <property type="match status" value="1"/>
</dbReference>
<dbReference type="SUPFAM" id="SSF48065">
    <property type="entry name" value="DBL homology domain (DH-domain)"/>
    <property type="match status" value="1"/>
</dbReference>
<dbReference type="SUPFAM" id="SSF50729">
    <property type="entry name" value="PH domain-like"/>
    <property type="match status" value="1"/>
</dbReference>
<dbReference type="SUPFAM" id="SSF50978">
    <property type="entry name" value="WD40 repeat-like"/>
    <property type="match status" value="1"/>
</dbReference>
<dbReference type="PROSITE" id="PS50010">
    <property type="entry name" value="DH_2"/>
    <property type="match status" value="1"/>
</dbReference>
<protein>
    <recommendedName>
        <fullName>Rho guanine nucleotide exchange factor 10-like protein</fullName>
    </recommendedName>
    <alternativeName>
        <fullName>GrinchGEF</fullName>
    </alternativeName>
</protein>
<accession>Q5R5M3</accession>
<keyword id="KW-0963">Cytoplasm</keyword>
<keyword id="KW-0344">Guanine-nucleotide releasing factor</keyword>
<keyword id="KW-0597">Phosphoprotein</keyword>
<keyword id="KW-1185">Reference proteome</keyword>
<comment type="function">
    <text evidence="1">Acts as a guanine nucleotide exchange factor (GEF) for RHOA, RHOB and RHOC.</text>
</comment>
<comment type="subunit">
    <text evidence="1">Interacts with RHOA, RHOB and RHOC.</text>
</comment>
<comment type="subcellular location">
    <subcellularLocation>
        <location evidence="1">Cytoplasm</location>
    </subcellularLocation>
</comment>
<sequence>MASSNPPPQPAIGDQLVPGAPGPSSEAEDDPGEAFEFDDSDDEEDTSAALGVPSLAPERDTDPPLIHLDSIPVTDPDPAAAPPGTGVPAWVSNGDAADAAFSGARHSSWKRKSSRRIDRFTFPALEEDVIYDDVPCESPDAHQPGAERNLLYEDAHRAGAPRQAEDLGWSSSEFESYSEDSGEEAKPEVEPAKHRVSFQPKMTQLMKAAKSGTKDGLEKTRMAVMRKVSFLHRKDVLGDSEEEDMGLLEVSVSDIKPPAPELGPMPEGLSPQQVVRRHILGSIVQSEGSYVESLKRILQDYRNPLMEMEPKALSARKCQVVFFRVKEILHCHSMFQIALSSRVAEWDSTEKIGDLFVASFSKSMVLDVYSDYVNNFTGAMSIIKKACLTKPAFLEFLKRRQVCSSDRVTLYGLMVKPIQRFPQFILLLQDMLKNTPRGHPDRLSLQLALTELETLAEKLNEQKRLADQVAEIQQLTKSVSDRSSLNKLLTSGQRQLLLCETLTETVYGDRGQLIKSKERRVFLLNDMLVCANINFKGQLEISSLVPLGPKYVVKWNTALPQVQVVEVGQDGGTYDKDNVLIQHSGAKKASASGQAQNKVYLGPPRLFQELQDLQKDLAVVEQITLLISTLHGTYQNLNMTVAQDWCLALQRLMRVKEEEIHSANKCRLRLLLPGKPDKSGRPTSFMVVFITPNPLSKISWVNRLHLAKIGLREENQPGWLCPDEDKKSKAPFWCPILACCIPAFSSRALSLQLGALVHSPVNCPLLGFSAVSTSLPQGYLWVGGGQEGAGGQVEIFSLNRPSPRTVKSFPLAAPVLCMEYIPELEEEAESRDESPTAADPSATVHPTICLGLQDGSILLYGSVDTGTQCLASCRSPGLQPVLCLRHSPFYLLAGLQDGTLAAYPRTSGGVLWDLESPPVCLTVGPGPVRTLLSLEDAVWASCGPRVTVLEATTLQPQQSFEAHQDEAVSVTHMVKAGSGVWMAFSSGTSIRLFHTETLEHLQEINIATRTTFLLPGQKHLCVTSLLICQGLLWVGTDQGVIVLLPVPRLEGIPKITGKGMVSLNGHCGPVAFLAVAISILAPDILRSDQEEAEGPRAEEEKPDGQAHQPMPDSHVGRELTRKKGILLQYRLRSTAHLPGPLLSMREPAPADGAALEHSEEDGSIYEMADDPDVWVRSRPCARDAHRKEICSVAIISGGQGYRNFGSALGSSGRLAPCGETDSTLLIWQVPLML</sequence>
<evidence type="ECO:0000250" key="1"/>
<evidence type="ECO:0000250" key="2">
    <source>
        <dbReference type="UniProtKB" id="A2AWP8"/>
    </source>
</evidence>
<evidence type="ECO:0000250" key="3">
    <source>
        <dbReference type="UniProtKB" id="Q9HCE6"/>
    </source>
</evidence>
<evidence type="ECO:0000255" key="4">
    <source>
        <dbReference type="PROSITE-ProRule" id="PRU00062"/>
    </source>
</evidence>
<evidence type="ECO:0000256" key="5">
    <source>
        <dbReference type="SAM" id="MobiDB-lite"/>
    </source>
</evidence>
<gene>
    <name type="primary">ARHGEF10L</name>
    <name type="synonym">GRINCHGEF</name>
</gene>